<proteinExistence type="inferred from homology"/>
<comment type="function">
    <text evidence="1">Ribonucleoside-diphosphate reductase holoenzyme provides the precursors necessary for viral DNA synthesis. Allows virus growth in non-dividing cells. Catalyzes the biosynthesis of deoxyribonucleotides from the corresponding ribonucleotides (By similarity).</text>
</comment>
<comment type="catalytic activity">
    <reaction>
        <text>a 2'-deoxyribonucleoside 5'-diphosphate + [thioredoxin]-disulfide + H2O = a ribonucleoside 5'-diphosphate + [thioredoxin]-dithiol</text>
        <dbReference type="Rhea" id="RHEA:23252"/>
        <dbReference type="Rhea" id="RHEA-COMP:10698"/>
        <dbReference type="Rhea" id="RHEA-COMP:10700"/>
        <dbReference type="ChEBI" id="CHEBI:15377"/>
        <dbReference type="ChEBI" id="CHEBI:29950"/>
        <dbReference type="ChEBI" id="CHEBI:50058"/>
        <dbReference type="ChEBI" id="CHEBI:57930"/>
        <dbReference type="ChEBI" id="CHEBI:73316"/>
        <dbReference type="EC" id="1.17.4.1"/>
    </reaction>
</comment>
<comment type="cofactor">
    <cofactor evidence="1">
        <name>Fe cation</name>
        <dbReference type="ChEBI" id="CHEBI:24875"/>
    </cofactor>
    <text evidence="1">Binds 2 iron ions per subunit.</text>
</comment>
<comment type="subunit">
    <text evidence="1">Heterotetramer composed of a homodimer of the large subunit (R1) and a homodimer of the small subunit (R2). Larger multisubunit protein complex are also active, composed of (R1)n(R2)n (By similarity).</text>
</comment>
<comment type="similarity">
    <text evidence="3">Belongs to the ribonucleoside diphosphate reductase small chain family.</text>
</comment>
<gene>
    <name type="ORF">ORF20</name>
</gene>
<accession>Q6R7K3</accession>
<name>RIR2_OSHVF</name>
<sequence length="579" mass="66994">MSQSTIKFDLGELTTTQCARLLSKFIRKATLTPEQFEILNTSYDELTEFDDHPLYGGATDHHKDIVGKYDHALLKPAVYQQLRDFATKMESSSWQQTEIDAESDIPTWEQISENERDCVRKVLAFFAVGDTLVKDRIAIFADEFPLPECKDFIDWQTVNEGVHQRVYNNYLDALVKDKIYLADLVNAYKDPEFAPIKKKVDWLGKIISVENDSRGEMVVGQVCTEAIMFAASFAILLKFRAPYMRALVLGNEFIRRDETLHFRFYAELLRLMPDRPSDERIAELLTEATEIELEFAEYVVPEGVKYITKDRLIQHVKANTNQVCEMLDINPIYFDQKGNVLLSPLLYMNTLESEQKINFFEGKATEYNTKQYKVDFNNLFPPVKKMIEFADEEEFIAAIVEGEGLSKDRNKDIVKQQLCLAWDHLSSHDMEGLVDMTWTLKDVHRIAMNHVIFNNGEFSNGYKFTVIDSGKVMYPTYETVEILESAVQGLIDDYNRDFSALDKGVEKFDKDKIRVAARFILDLLYIHPFSDGNGRTARLIMAHLIGKMTTPINREEYLKSIYHYRQTGDVSVFVDQFYR</sequence>
<organismHost>
    <name type="scientific">Magallana gigas</name>
    <name type="common">Pacific oyster</name>
    <name type="synonym">Crassostrea gigas</name>
    <dbReference type="NCBI Taxonomy" id="29159"/>
</organismHost>
<organismHost>
    <name type="scientific">Pecten maximus</name>
    <name type="common">King scallop</name>
    <name type="synonym">Pilgrim's clam</name>
    <dbReference type="NCBI Taxonomy" id="6579"/>
</organismHost>
<protein>
    <recommendedName>
        <fullName>Ribonucleoside-diphosphate reductase small chain</fullName>
        <ecNumber>1.17.4.1</ecNumber>
    </recommendedName>
</protein>
<organism>
    <name type="scientific">Ostreid herpesvirus 1 (isolate France)</name>
    <name type="common">OsHV-1</name>
    <name type="synonym">Pacific oyster herpesvirus</name>
    <dbReference type="NCBI Taxonomy" id="654903"/>
    <lineage>
        <taxon>Viruses</taxon>
        <taxon>Duplodnaviria</taxon>
        <taxon>Heunggongvirae</taxon>
        <taxon>Peploviricota</taxon>
        <taxon>Herviviricetes</taxon>
        <taxon>Herpesvirales</taxon>
        <taxon>Malacoherpesviridae</taxon>
        <taxon>Ostreavirus</taxon>
        <taxon>Ostreavirus ostreidmalaco1</taxon>
        <taxon>Ostreid herpesvirus 1</taxon>
    </lineage>
</organism>
<feature type="chain" id="PRO_0000385024" description="Ribonucleoside-diphosphate reductase small chain">
    <location>
        <begin position="1"/>
        <end position="579"/>
    </location>
</feature>
<feature type="domain" description="Fido" evidence="2">
    <location>
        <begin position="435"/>
        <end position="579"/>
    </location>
</feature>
<feature type="active site" evidence="1">
    <location>
        <position position="167"/>
    </location>
</feature>
<feature type="binding site" evidence="1">
    <location>
        <position position="130"/>
    </location>
    <ligand>
        <name>Fe cation</name>
        <dbReference type="ChEBI" id="CHEBI:24875"/>
        <label>1</label>
    </ligand>
</feature>
<feature type="binding site" evidence="1">
    <location>
        <position position="160"/>
    </location>
    <ligand>
        <name>Fe cation</name>
        <dbReference type="ChEBI" id="CHEBI:24875"/>
        <label>1</label>
    </ligand>
</feature>
<feature type="binding site" evidence="1">
    <location>
        <position position="160"/>
    </location>
    <ligand>
        <name>Fe cation</name>
        <dbReference type="ChEBI" id="CHEBI:24875"/>
        <label>2</label>
    </ligand>
</feature>
<feature type="binding site" evidence="1">
    <location>
        <position position="163"/>
    </location>
    <ligand>
        <name>Fe cation</name>
        <dbReference type="ChEBI" id="CHEBI:24875"/>
        <label>1</label>
    </ligand>
</feature>
<feature type="binding site" evidence="1">
    <location>
        <position position="225"/>
    </location>
    <ligand>
        <name>Fe cation</name>
        <dbReference type="ChEBI" id="CHEBI:24875"/>
        <label>2</label>
    </ligand>
</feature>
<feature type="binding site" evidence="1">
    <location>
        <position position="258"/>
    </location>
    <ligand>
        <name>Fe cation</name>
        <dbReference type="ChEBI" id="CHEBI:24875"/>
        <label>2</label>
    </ligand>
</feature>
<feature type="binding site" evidence="1">
    <location>
        <position position="261"/>
    </location>
    <ligand>
        <name>Fe cation</name>
        <dbReference type="ChEBI" id="CHEBI:24875"/>
        <label>2</label>
    </ligand>
</feature>
<keyword id="KW-0215">Deoxyribonucleotide synthesis</keyword>
<keyword id="KW-0408">Iron</keyword>
<keyword id="KW-0479">Metal-binding</keyword>
<keyword id="KW-0560">Oxidoreductase</keyword>
<keyword id="KW-1185">Reference proteome</keyword>
<evidence type="ECO:0000250" key="1"/>
<evidence type="ECO:0000255" key="2">
    <source>
        <dbReference type="PROSITE-ProRule" id="PRU00791"/>
    </source>
</evidence>
<evidence type="ECO:0000305" key="3"/>
<reference key="1">
    <citation type="journal article" date="2005" name="J. Gen. Virol.">
        <title>A novel class of herpesvirus with bivalve hosts.</title>
        <authorList>
            <person name="Davison A.J."/>
            <person name="Trus B.L."/>
            <person name="Cheng N."/>
            <person name="Steven A.C."/>
            <person name="Watson M.S."/>
            <person name="Cunningham C."/>
            <person name="Le Deuff R.M."/>
            <person name="Renault T."/>
        </authorList>
    </citation>
    <scope>NUCLEOTIDE SEQUENCE [LARGE SCALE GENOMIC DNA]</scope>
</reference>
<reference key="2">
    <citation type="journal article" date="2009" name="Trends Biochem. Sci.">
        <title>Tinkering with a viral ribonucleotide reductase.</title>
        <authorList>
            <person name="Lembo D."/>
            <person name="Brune W."/>
        </authorList>
    </citation>
    <scope>REVIEW</scope>
</reference>
<dbReference type="EC" id="1.17.4.1"/>
<dbReference type="EMBL" id="AY509253">
    <property type="protein sequence ID" value="AAS00912.1"/>
    <property type="molecule type" value="Genomic_DNA"/>
</dbReference>
<dbReference type="RefSeq" id="YP_024565.1">
    <property type="nucleotide sequence ID" value="NC_005881.2"/>
</dbReference>
<dbReference type="SMR" id="Q6R7K3"/>
<dbReference type="KEGG" id="vg:2948202"/>
<dbReference type="Proteomes" id="UP000007021">
    <property type="component" value="Segment"/>
</dbReference>
<dbReference type="GO" id="GO:0046872">
    <property type="term" value="F:metal ion binding"/>
    <property type="evidence" value="ECO:0007669"/>
    <property type="project" value="UniProtKB-KW"/>
</dbReference>
<dbReference type="GO" id="GO:0004748">
    <property type="term" value="F:ribonucleoside-diphosphate reductase activity, thioredoxin disulfide as acceptor"/>
    <property type="evidence" value="ECO:0007669"/>
    <property type="project" value="UniProtKB-EC"/>
</dbReference>
<dbReference type="GO" id="GO:0009263">
    <property type="term" value="P:deoxyribonucleotide biosynthetic process"/>
    <property type="evidence" value="ECO:0007669"/>
    <property type="project" value="UniProtKB-KW"/>
</dbReference>
<dbReference type="CDD" id="cd01049">
    <property type="entry name" value="RNRR2"/>
    <property type="match status" value="1"/>
</dbReference>
<dbReference type="Gene3D" id="1.10.3290.10">
    <property type="entry name" value="Fido-like domain"/>
    <property type="match status" value="1"/>
</dbReference>
<dbReference type="Gene3D" id="1.10.620.20">
    <property type="entry name" value="Ribonucleotide Reductase, subunit A"/>
    <property type="match status" value="1"/>
</dbReference>
<dbReference type="InterPro" id="IPR009078">
    <property type="entry name" value="Ferritin-like_SF"/>
</dbReference>
<dbReference type="InterPro" id="IPR003812">
    <property type="entry name" value="Fido"/>
</dbReference>
<dbReference type="InterPro" id="IPR036597">
    <property type="entry name" value="Fido-like_dom_sf"/>
</dbReference>
<dbReference type="InterPro" id="IPR012348">
    <property type="entry name" value="RNR-like"/>
</dbReference>
<dbReference type="InterPro" id="IPR033909">
    <property type="entry name" value="RNR_small"/>
</dbReference>
<dbReference type="InterPro" id="IPR000358">
    <property type="entry name" value="RNR_small_fam"/>
</dbReference>
<dbReference type="PANTHER" id="PTHR23409">
    <property type="entry name" value="RIBONUCLEOSIDE-DIPHOSPHATE REDUCTASE SMALL CHAIN"/>
    <property type="match status" value="1"/>
</dbReference>
<dbReference type="PANTHER" id="PTHR23409:SF18">
    <property type="entry name" value="RIBONUCLEOSIDE-DIPHOSPHATE REDUCTASE SUBUNIT M2"/>
    <property type="match status" value="1"/>
</dbReference>
<dbReference type="Pfam" id="PF02661">
    <property type="entry name" value="Fic"/>
    <property type="match status" value="1"/>
</dbReference>
<dbReference type="Pfam" id="PF00268">
    <property type="entry name" value="Ribonuc_red_sm"/>
    <property type="match status" value="1"/>
</dbReference>
<dbReference type="SUPFAM" id="SSF47240">
    <property type="entry name" value="Ferritin-like"/>
    <property type="match status" value="1"/>
</dbReference>
<dbReference type="SUPFAM" id="SSF140931">
    <property type="entry name" value="Fic-like"/>
    <property type="match status" value="1"/>
</dbReference>
<dbReference type="PROSITE" id="PS51459">
    <property type="entry name" value="FIDO"/>
    <property type="match status" value="1"/>
</dbReference>